<name>GBRB2_HUMAN</name>
<feature type="signal peptide" evidence="1">
    <location>
        <begin position="1"/>
        <end position="25"/>
    </location>
</feature>
<feature type="chain" id="PRO_0000000459" description="Gamma-aminobutyric acid receptor subunit beta-2">
    <location>
        <begin position="26"/>
        <end position="512"/>
    </location>
</feature>
<feature type="topological domain" description="Extracellular" evidence="25">
    <location>
        <begin position="26"/>
        <end position="241"/>
    </location>
</feature>
<feature type="transmembrane region" description="Helical" evidence="8">
    <location>
        <begin position="242"/>
        <end position="262"/>
    </location>
</feature>
<feature type="topological domain" description="Cytoplasmic" evidence="25">
    <location>
        <begin position="263"/>
        <end position="272"/>
    </location>
</feature>
<feature type="transmembrane region" description="Helical" evidence="8">
    <location>
        <begin position="273"/>
        <end position="292"/>
    </location>
</feature>
<feature type="topological domain" description="Extracellular" evidence="25">
    <location>
        <begin position="293"/>
        <end position="310"/>
    </location>
</feature>
<feature type="transmembrane region" description="Helical" evidence="8">
    <location>
        <begin position="311"/>
        <end position="331"/>
    </location>
</feature>
<feature type="topological domain" description="Cytoplasmic" evidence="25">
    <location>
        <begin position="332"/>
        <end position="490"/>
    </location>
</feature>
<feature type="transmembrane region" description="Helical" evidence="8">
    <location>
        <begin position="491"/>
        <end position="511"/>
    </location>
</feature>
<feature type="topological domain" description="Extracellular" evidence="25">
    <location>
        <position position="512"/>
    </location>
</feature>
<feature type="binding site" description="in chain B" evidence="5">
    <location>
        <position position="121"/>
    </location>
    <ligand>
        <name>histamine</name>
        <dbReference type="ChEBI" id="CHEBI:58432"/>
        <note>ligand shared between two neighboring beta subunits</note>
    </ligand>
</feature>
<feature type="binding site" description="in chain B" evidence="5">
    <location>
        <begin position="180"/>
        <end position="181"/>
    </location>
    <ligand>
        <name>histamine</name>
        <dbReference type="ChEBI" id="CHEBI:58432"/>
        <note>ligand shared between two neighboring beta subunits</note>
    </ligand>
</feature>
<feature type="binding site" evidence="4">
    <location>
        <position position="181"/>
    </location>
    <ligand>
        <name>4-aminobutanoate</name>
        <dbReference type="ChEBI" id="CHEBI:59888"/>
        <note>ligand shared with the neighboring alpha subunit</note>
    </ligand>
</feature>
<feature type="binding site" evidence="16 27 28">
    <location>
        <position position="226"/>
    </location>
    <ligand>
        <name>4-aminobutanoate</name>
        <dbReference type="ChEBI" id="CHEBI:59888"/>
        <note>ligand shared with the neighboring alpha subunit</note>
    </ligand>
</feature>
<feature type="binding site" description="in chain B" evidence="5">
    <location>
        <position position="226"/>
    </location>
    <ligand>
        <name>histamine</name>
        <dbReference type="ChEBI" id="CHEBI:58432"/>
        <note>ligand shared between two neighboring beta subunits</note>
    </ligand>
</feature>
<feature type="modified residue" description="Phosphotyrosine" evidence="6">
    <location>
        <position position="441"/>
    </location>
</feature>
<feature type="glycosylation site" description="N-linked (GlcNAc...) asparagine" evidence="8">
    <location>
        <position position="32"/>
    </location>
</feature>
<feature type="glycosylation site" description="N-linked (GlcNAc...) asparagine" evidence="16 27">
    <location>
        <position position="104"/>
    </location>
</feature>
<feature type="glycosylation site" description="N-linked (GlcNAc...) asparagine" evidence="16 27">
    <location>
        <position position="173"/>
    </location>
</feature>
<feature type="disulfide bond" evidence="16 27">
    <location>
        <begin position="160"/>
        <end position="174"/>
    </location>
</feature>
<feature type="splice variant" id="VSP_038823" description="In isoform 3." evidence="20">
    <location>
        <begin position="1"/>
        <end position="63"/>
    </location>
</feature>
<feature type="splice variant" id="VSP_038825" description="In isoform 2 and isoform 4." evidence="18 19 20 23 24">
    <location>
        <begin position="360"/>
        <end position="397"/>
    </location>
</feature>
<feature type="splice variant" id="VSP_038824" description="In isoform 3." evidence="20">
    <original>IFYKDIKQNGTQYRSLW</original>
    <variation>VNSEGKPSLLLKLMEEC</variation>
    <location>
        <begin position="360"/>
        <end position="376"/>
    </location>
</feature>
<feature type="splice variant" id="VSP_038828" description="In isoform 3." evidence="20">
    <location>
        <begin position="377"/>
        <end position="512"/>
    </location>
</feature>
<feature type="splice variant" id="VSP_038826" description="In isoform 4." evidence="20">
    <original>E</original>
    <variation>D</variation>
    <location>
        <position position="410"/>
    </location>
</feature>
<feature type="splice variant" id="VSP_038827" description="In isoform 4." evidence="20">
    <location>
        <begin position="411"/>
        <end position="512"/>
    </location>
</feature>
<feature type="sequence variant" id="VAR_080712" description="In IECEE2; uncertain significance; dbSNP:rs606231468." evidence="12 15">
    <original>M</original>
    <variation>T</variation>
    <location>
        <position position="79"/>
    </location>
</feature>
<feature type="sequence variant" id="VAR_080713" description="In IECEE2; uncertain significance; dbSNP:rs1554094149." evidence="15">
    <original>Y</original>
    <variation>H</variation>
    <location>
        <position position="244"/>
    </location>
</feature>
<feature type="sequence variant" id="VAR_080714" description="In IECEE2; uncertain significance; dbSNP:rs1554094145." evidence="15">
    <original>L</original>
    <variation>S</variation>
    <location>
        <position position="277"/>
    </location>
</feature>
<feature type="sequence variant" id="VAR_080715" description="In IECEE2; uncertain significance." evidence="15">
    <original>T</original>
    <variation>K</variation>
    <location>
        <position position="284"/>
    </location>
</feature>
<feature type="sequence variant" id="VAR_080716" description="In IECEE2; loss of localization to the cell membrane; retained intracellularly it affects the cell surface expression of the GABA receptor; decreased GABA receptor activity; dbSNP:rs1554093894." evidence="14">
    <original>T</original>
    <variation>P</variation>
    <location>
        <position position="287"/>
    </location>
</feature>
<feature type="sequence variant" id="VAR_080717" description="In IECEE2; uncertain significance." evidence="15">
    <original>R</original>
    <variation>P</variation>
    <location>
        <position position="293"/>
    </location>
</feature>
<feature type="sequence variant" id="VAR_080718" description="In IECEE2; uncertain significance; dbSNP:rs1554093885." evidence="15">
    <original>K</original>
    <variation>R</variation>
    <location>
        <position position="303"/>
    </location>
</feature>
<feature type="sequence variant" id="VAR_080719" description="In IECEE2; uncertain significance." evidence="15">
    <original>A</original>
    <variation>V</variation>
    <location>
        <position position="304"/>
    </location>
</feature>
<feature type="sequence variant" id="VAR_080720" description="In IECEE2; uncertain significance; dbSNP:rs1554093884." evidence="15">
    <original>V</original>
    <variation>I</variation>
    <location>
        <position position="316"/>
    </location>
</feature>
<feature type="mutagenesis site" description="Displays reduced current rundown following repeated receptor activation." evidence="10">
    <original>T</original>
    <variation>A</variation>
    <location>
        <position position="389"/>
    </location>
</feature>
<feature type="sequence conflict" description="In Ref. 4; BAF82419." evidence="25" ref="4">
    <original>Q</original>
    <variation>L</variation>
    <location>
        <position position="336"/>
    </location>
</feature>
<feature type="helix" evidence="29">
    <location>
        <begin position="32"/>
        <end position="43"/>
    </location>
</feature>
<feature type="turn" evidence="29">
    <location>
        <begin position="44"/>
        <end position="46"/>
    </location>
</feature>
<feature type="strand" evidence="29">
    <location>
        <begin position="55"/>
        <end position="58"/>
    </location>
</feature>
<feature type="strand" evidence="29">
    <location>
        <begin position="60"/>
        <end position="75"/>
    </location>
</feature>
<feature type="turn" evidence="29">
    <location>
        <begin position="76"/>
        <end position="79"/>
    </location>
</feature>
<feature type="strand" evidence="29">
    <location>
        <begin position="80"/>
        <end position="92"/>
    </location>
</feature>
<feature type="helix" evidence="29">
    <location>
        <begin position="94"/>
        <end position="96"/>
    </location>
</feature>
<feature type="strand" evidence="29">
    <location>
        <begin position="105"/>
        <end position="107"/>
    </location>
</feature>
<feature type="helix" evidence="29">
    <location>
        <begin position="109"/>
        <end position="114"/>
    </location>
</feature>
<feature type="strand" evidence="29">
    <location>
        <begin position="120"/>
        <end position="122"/>
    </location>
</feature>
<feature type="strand" evidence="29">
    <location>
        <begin position="125"/>
        <end position="130"/>
    </location>
</feature>
<feature type="strand" evidence="29">
    <location>
        <begin position="133"/>
        <end position="135"/>
    </location>
</feature>
<feature type="strand" evidence="29">
    <location>
        <begin position="138"/>
        <end position="142"/>
    </location>
</feature>
<feature type="strand" evidence="29">
    <location>
        <begin position="146"/>
        <end position="159"/>
    </location>
</feature>
<feature type="turn" evidence="29">
    <location>
        <begin position="165"/>
        <end position="168"/>
    </location>
</feature>
<feature type="strand" evidence="29">
    <location>
        <begin position="171"/>
        <end position="182"/>
    </location>
</feature>
<feature type="turn" evidence="29">
    <location>
        <begin position="185"/>
        <end position="187"/>
    </location>
</feature>
<feature type="strand" evidence="29">
    <location>
        <begin position="188"/>
        <end position="192"/>
    </location>
</feature>
<feature type="turn" evidence="29">
    <location>
        <begin position="193"/>
        <end position="198"/>
    </location>
</feature>
<feature type="strand" evidence="29">
    <location>
        <begin position="199"/>
        <end position="202"/>
    </location>
</feature>
<feature type="strand" evidence="29">
    <location>
        <begin position="208"/>
        <end position="224"/>
    </location>
</feature>
<feature type="strand" evidence="29">
    <location>
        <begin position="227"/>
        <end position="240"/>
    </location>
</feature>
<feature type="helix" evidence="29">
    <location>
        <begin position="243"/>
        <end position="248"/>
    </location>
</feature>
<feature type="helix" evidence="29">
    <location>
        <begin position="250"/>
        <end position="262"/>
    </location>
</feature>
<feature type="helix" evidence="29">
    <location>
        <begin position="263"/>
        <end position="265"/>
    </location>
</feature>
<feature type="helix" evidence="29">
    <location>
        <begin position="271"/>
        <end position="285"/>
    </location>
</feature>
<feature type="turn" evidence="29">
    <location>
        <begin position="286"/>
        <end position="289"/>
    </location>
</feature>
<feature type="helix" evidence="29">
    <location>
        <begin position="290"/>
        <end position="293"/>
    </location>
</feature>
<feature type="helix" evidence="29">
    <location>
        <begin position="304"/>
        <end position="328"/>
    </location>
</feature>
<feature type="turn" evidence="30">
    <location>
        <begin position="329"/>
        <end position="331"/>
    </location>
</feature>
<feature type="helix" evidence="29">
    <location>
        <begin position="487"/>
        <end position="509"/>
    </location>
</feature>
<reference key="1">
    <citation type="journal article" date="1993" name="Mol. Pharmacol.">
        <title>Role of the beta subunit in determining the pharmacology of human gamma-aminobutyric acid type A receptors.</title>
        <authorList>
            <person name="Hadingham K.L."/>
            <person name="Wingrove P.B."/>
            <person name="Wafford K.A."/>
            <person name="Bain C."/>
            <person name="Kemp J.A."/>
            <person name="Palmer K.J."/>
            <person name="Wilson A.W."/>
            <person name="Wilcox A.S."/>
            <person name="Sikela J.M."/>
            <person name="Ragan C.I."/>
        </authorList>
    </citation>
    <scope>NUCLEOTIDE SEQUENCE [MRNA] (ISOFORM 2)</scope>
    <scope>FUNCTION</scope>
    <scope>SUBCELLULAR LOCATION</scope>
    <scope>SUBUNIT</scope>
    <source>
        <tissue>Brain</tissue>
    </source>
</reference>
<reference key="2">
    <citation type="journal article" date="1995" name="Brain Res. Mol. Brain Res.">
        <title>Cloning, sequence analysis and expression of two forms of mRNA coding for the human beta 2 subunit of the GABAA receptor.</title>
        <authorList>
            <person name="McKinley D.D."/>
            <person name="Lennon D.J."/>
            <person name="Carter D.B."/>
        </authorList>
    </citation>
    <scope>NUCLEOTIDE SEQUENCE [MRNA] (ISOFORMS 1 AND 2)</scope>
    <source>
        <tissue>Brain</tissue>
    </source>
</reference>
<reference key="3">
    <citation type="journal article" date="2009" name="PLoS ONE">
        <title>Alternative-splicing in the exon-10 region of GABA(A) receptor beta(2) subunit gene: relationships between novel isoforms and psychotic disorders.</title>
        <authorList>
            <person name="Zhao C."/>
            <person name="Xu Z."/>
            <person name="Wang F."/>
            <person name="Chen J."/>
            <person name="Ng S.K."/>
            <person name="Wong P.W."/>
            <person name="Yu Z."/>
            <person name="Pun F.W."/>
            <person name="Ren L."/>
            <person name="Lo W.S."/>
            <person name="Tsang S.Y."/>
            <person name="Xue H."/>
        </authorList>
    </citation>
    <scope>NUCLEOTIDE SEQUENCE [MRNA] (ISOFORMS 3 AND 4)</scope>
    <scope>TISSUE SPECIFICITY</scope>
    <scope>MUTAGENESIS OF THR-389</scope>
    <scope>FUNCTION</scope>
    <scope>SUBCELLULAR LOCATION</scope>
    <scope>ALTERNATIVE SPLICING</scope>
    <source>
        <tissue>Brain</tissue>
    </source>
</reference>
<reference key="4">
    <citation type="journal article" date="2004" name="Nat. Genet.">
        <title>Complete sequencing and characterization of 21,243 full-length human cDNAs.</title>
        <authorList>
            <person name="Ota T."/>
            <person name="Suzuki Y."/>
            <person name="Nishikawa T."/>
            <person name="Otsuki T."/>
            <person name="Sugiyama T."/>
            <person name="Irie R."/>
            <person name="Wakamatsu A."/>
            <person name="Hayashi K."/>
            <person name="Sato H."/>
            <person name="Nagai K."/>
            <person name="Kimura K."/>
            <person name="Makita H."/>
            <person name="Sekine M."/>
            <person name="Obayashi M."/>
            <person name="Nishi T."/>
            <person name="Shibahara T."/>
            <person name="Tanaka T."/>
            <person name="Ishii S."/>
            <person name="Yamamoto J."/>
            <person name="Saito K."/>
            <person name="Kawai Y."/>
            <person name="Isono Y."/>
            <person name="Nakamura Y."/>
            <person name="Nagahari K."/>
            <person name="Murakami K."/>
            <person name="Yasuda T."/>
            <person name="Iwayanagi T."/>
            <person name="Wagatsuma M."/>
            <person name="Shiratori A."/>
            <person name="Sudo H."/>
            <person name="Hosoiri T."/>
            <person name="Kaku Y."/>
            <person name="Kodaira H."/>
            <person name="Kondo H."/>
            <person name="Sugawara M."/>
            <person name="Takahashi M."/>
            <person name="Kanda K."/>
            <person name="Yokoi T."/>
            <person name="Furuya T."/>
            <person name="Kikkawa E."/>
            <person name="Omura Y."/>
            <person name="Abe K."/>
            <person name="Kamihara K."/>
            <person name="Katsuta N."/>
            <person name="Sato K."/>
            <person name="Tanikawa M."/>
            <person name="Yamazaki M."/>
            <person name="Ninomiya K."/>
            <person name="Ishibashi T."/>
            <person name="Yamashita H."/>
            <person name="Murakawa K."/>
            <person name="Fujimori K."/>
            <person name="Tanai H."/>
            <person name="Kimata M."/>
            <person name="Watanabe M."/>
            <person name="Hiraoka S."/>
            <person name="Chiba Y."/>
            <person name="Ishida S."/>
            <person name="Ono Y."/>
            <person name="Takiguchi S."/>
            <person name="Watanabe S."/>
            <person name="Yosida M."/>
            <person name="Hotuta T."/>
            <person name="Kusano J."/>
            <person name="Kanehori K."/>
            <person name="Takahashi-Fujii A."/>
            <person name="Hara H."/>
            <person name="Tanase T.-O."/>
            <person name="Nomura Y."/>
            <person name="Togiya S."/>
            <person name="Komai F."/>
            <person name="Hara R."/>
            <person name="Takeuchi K."/>
            <person name="Arita M."/>
            <person name="Imose N."/>
            <person name="Musashino K."/>
            <person name="Yuuki H."/>
            <person name="Oshima A."/>
            <person name="Sasaki N."/>
            <person name="Aotsuka S."/>
            <person name="Yoshikawa Y."/>
            <person name="Matsunawa H."/>
            <person name="Ichihara T."/>
            <person name="Shiohata N."/>
            <person name="Sano S."/>
            <person name="Moriya S."/>
            <person name="Momiyama H."/>
            <person name="Satoh N."/>
            <person name="Takami S."/>
            <person name="Terashima Y."/>
            <person name="Suzuki O."/>
            <person name="Nakagawa S."/>
            <person name="Senoh A."/>
            <person name="Mizoguchi H."/>
            <person name="Goto Y."/>
            <person name="Shimizu F."/>
            <person name="Wakebe H."/>
            <person name="Hishigaki H."/>
            <person name="Watanabe T."/>
            <person name="Sugiyama A."/>
            <person name="Takemoto M."/>
            <person name="Kawakami B."/>
            <person name="Yamazaki M."/>
            <person name="Watanabe K."/>
            <person name="Kumagai A."/>
            <person name="Itakura S."/>
            <person name="Fukuzumi Y."/>
            <person name="Fujimori Y."/>
            <person name="Komiyama M."/>
            <person name="Tashiro H."/>
            <person name="Tanigami A."/>
            <person name="Fujiwara T."/>
            <person name="Ono T."/>
            <person name="Yamada K."/>
            <person name="Fujii Y."/>
            <person name="Ozaki K."/>
            <person name="Hirao M."/>
            <person name="Ohmori Y."/>
            <person name="Kawabata A."/>
            <person name="Hikiji T."/>
            <person name="Kobatake N."/>
            <person name="Inagaki H."/>
            <person name="Ikema Y."/>
            <person name="Okamoto S."/>
            <person name="Okitani R."/>
            <person name="Kawakami T."/>
            <person name="Noguchi S."/>
            <person name="Itoh T."/>
            <person name="Shigeta K."/>
            <person name="Senba T."/>
            <person name="Matsumura K."/>
            <person name="Nakajima Y."/>
            <person name="Mizuno T."/>
            <person name="Morinaga M."/>
            <person name="Sasaki M."/>
            <person name="Togashi T."/>
            <person name="Oyama M."/>
            <person name="Hata H."/>
            <person name="Watanabe M."/>
            <person name="Komatsu T."/>
            <person name="Mizushima-Sugano J."/>
            <person name="Satoh T."/>
            <person name="Shirai Y."/>
            <person name="Takahashi Y."/>
            <person name="Nakagawa K."/>
            <person name="Okumura K."/>
            <person name="Nagase T."/>
            <person name="Nomura N."/>
            <person name="Kikuchi H."/>
            <person name="Masuho Y."/>
            <person name="Yamashita R."/>
            <person name="Nakai K."/>
            <person name="Yada T."/>
            <person name="Nakamura Y."/>
            <person name="Ohara O."/>
            <person name="Isogai T."/>
            <person name="Sugano S."/>
        </authorList>
    </citation>
    <scope>NUCLEOTIDE SEQUENCE [LARGE SCALE MRNA] (ISOFORM 2)</scope>
    <source>
        <tissue>Brain</tissue>
    </source>
</reference>
<reference key="5">
    <citation type="submission" date="2005-09" db="EMBL/GenBank/DDBJ databases">
        <authorList>
            <person name="Mural R.J."/>
            <person name="Istrail S."/>
            <person name="Sutton G.G."/>
            <person name="Florea L."/>
            <person name="Halpern A.L."/>
            <person name="Mobarry C.M."/>
            <person name="Lippert R."/>
            <person name="Walenz B."/>
            <person name="Shatkay H."/>
            <person name="Dew I."/>
            <person name="Miller J.R."/>
            <person name="Flanigan M.J."/>
            <person name="Edwards N.J."/>
            <person name="Bolanos R."/>
            <person name="Fasulo D."/>
            <person name="Halldorsson B.V."/>
            <person name="Hannenhalli S."/>
            <person name="Turner R."/>
            <person name="Yooseph S."/>
            <person name="Lu F."/>
            <person name="Nusskern D.R."/>
            <person name="Shue B.C."/>
            <person name="Zheng X.H."/>
            <person name="Zhong F."/>
            <person name="Delcher A.L."/>
            <person name="Huson D.H."/>
            <person name="Kravitz S.A."/>
            <person name="Mouchard L."/>
            <person name="Reinert K."/>
            <person name="Remington K.A."/>
            <person name="Clark A.G."/>
            <person name="Waterman M.S."/>
            <person name="Eichler E.E."/>
            <person name="Adams M.D."/>
            <person name="Hunkapiller M.W."/>
            <person name="Myers E.W."/>
            <person name="Venter J.C."/>
        </authorList>
    </citation>
    <scope>NUCLEOTIDE SEQUENCE [LARGE SCALE GENOMIC DNA]</scope>
</reference>
<reference key="6">
    <citation type="journal article" date="2004" name="Genome Res.">
        <title>The status, quality, and expansion of the NIH full-length cDNA project: the Mammalian Gene Collection (MGC).</title>
        <authorList>
            <consortium name="The MGC Project Team"/>
        </authorList>
    </citation>
    <scope>NUCLEOTIDE SEQUENCE [LARGE SCALE MRNA] (ISOFORM 2)</scope>
</reference>
<reference key="7">
    <citation type="journal article" date="2006" name="Mol. Psychiatry">
        <title>Two isoforms of GABA(A) receptor beta2 subunit with different electrophysiological properties: Differential expression and genotypical correlations in schizophrenia.</title>
        <authorList>
            <person name="Zhao C."/>
            <person name="Xu Z."/>
            <person name="Chen J."/>
            <person name="Yu Z."/>
            <person name="Tong K.L."/>
            <person name="Lo W.S."/>
            <person name="Pun F.W."/>
            <person name="Ng S.K."/>
            <person name="Tsang S.Y."/>
            <person name="Xue H."/>
        </authorList>
    </citation>
    <scope>TISSUE SPECIFICITY</scope>
</reference>
<reference key="8">
    <citation type="journal article" date="2013" name="Eur. J. Neurosci.">
        <title>GABA(A) receptors can initiate the formation of functional inhibitory GABAergic synapses.</title>
        <authorList>
            <person name="Fuchs C."/>
            <person name="Abitbol K."/>
            <person name="Burden J.J."/>
            <person name="Mercer A."/>
            <person name="Brown L."/>
            <person name="Iball J."/>
            <person name="Anne Stephenson F."/>
            <person name="Thomson A.M."/>
            <person name="Jovanovic J.N."/>
        </authorList>
    </citation>
    <scope>FUNCTION</scope>
</reference>
<reference key="9">
    <citation type="journal article" date="2014" name="J. Vis. Exp.">
        <title>Inhibitory synapse formation in a co-culture model incorporating GABAergic medium spiny neurons and HEK293 cells stably expressing GABAA receptors.</title>
        <authorList>
            <person name="Brown L.E."/>
            <person name="Fuchs C."/>
            <person name="Nicholson M.W."/>
            <person name="Stephenson F.A."/>
            <person name="Thomson A.M."/>
            <person name="Jovanovic J.N."/>
        </authorList>
    </citation>
    <scope>FUNCTION</scope>
</reference>
<reference evidence="27 28" key="10">
    <citation type="journal article" date="2018" name="Nature">
        <title>Structure of a human synaptic GABAA receptor.</title>
        <authorList>
            <person name="Zhu S."/>
            <person name="Noviello C.M."/>
            <person name="Teng J."/>
            <person name="Walsh R.M. Jr."/>
            <person name="Kim J.J."/>
            <person name="Hibbs R.E."/>
        </authorList>
    </citation>
    <scope>STRUCTURE BY ELECTRON MICROSCOPY (3.80 ANGSTROMS) OF 25-331 IN COMPLEX WITH GABA AND FLUMAZENIL</scope>
    <scope>FUNCTION</scope>
    <scope>ACTIVITY REGULATION</scope>
    <scope>SUBUNIT</scope>
    <scope>SUBCELLULAR LOCATION</scope>
    <scope>DISULFIDE BOND</scope>
    <scope>GLYCOSYLATION AT ASN-104 AND ASN-173</scope>
</reference>
<reference key="11">
    <citation type="journal article" date="2014" name="Am. J. Med. Genet. A">
        <title>A novel variant in GABRB2 associated with intellectual disability and epilepsy.</title>
        <authorList>
            <person name="Srivastava S."/>
            <person name="Cohen J."/>
            <person name="Pevsner J."/>
            <person name="Aradhya S."/>
            <person name="McKnight D."/>
            <person name="Butler E."/>
            <person name="Johnston M."/>
            <person name="Fatemi A."/>
        </authorList>
    </citation>
    <scope>VARIANT IECEE2 THR-79</scope>
</reference>
<reference key="12">
    <citation type="journal article" date="2017" name="Am. J. Hum. Genet.">
        <title>High rate of recurrent de novo mutations in developmental and epileptic encephalopathies.</title>
        <authorList>
            <consortium name="Deciphering Developmental Disorders Study"/>
            <person name="Hamdan F.F."/>
            <person name="Myers C.T."/>
            <person name="Cossette P."/>
            <person name="Lemay P."/>
            <person name="Spiegelman D."/>
            <person name="Laporte A.D."/>
            <person name="Nassif C."/>
            <person name="Diallo O."/>
            <person name="Monlong J."/>
            <person name="Cadieux-Dion M."/>
            <person name="Dobrzeniecka S."/>
            <person name="Meloche C."/>
            <person name="Retterer K."/>
            <person name="Cho M.T."/>
            <person name="Rosenfeld J.A."/>
            <person name="Bi W."/>
            <person name="Massicotte C."/>
            <person name="Miguet M."/>
            <person name="Brunga L."/>
            <person name="Regan B.M."/>
            <person name="Mo K."/>
            <person name="Tam C."/>
            <person name="Schneider A."/>
            <person name="Hollingsworth G."/>
            <person name="FitzPatrick D.R."/>
            <person name="Donaldson A."/>
            <person name="Canham N."/>
            <person name="Blair E."/>
            <person name="Kerr B."/>
            <person name="Fry A.E."/>
            <person name="Thomas R.H."/>
            <person name="Shelagh J."/>
            <person name="Hurst J.A."/>
            <person name="Brittain H."/>
            <person name="Blyth M."/>
            <person name="Lebel R.R."/>
            <person name="Gerkes E.H."/>
            <person name="Davis-Keppen L."/>
            <person name="Stein Q."/>
            <person name="Chung W.K."/>
            <person name="Dorison S.J."/>
            <person name="Benke P.J."/>
            <person name="Fassi E."/>
            <person name="Corsten-Janssen N."/>
            <person name="Kamsteeg E.J."/>
            <person name="Mau-Them F.T."/>
            <person name="Bruel A.L."/>
            <person name="Verloes A."/>
            <person name="Ounap K."/>
            <person name="Wojcik M.H."/>
            <person name="Albert D.V.F."/>
            <person name="Venkateswaran S."/>
            <person name="Ware T."/>
            <person name="Jones D."/>
            <person name="Liu Y.C."/>
            <person name="Mohammad S.S."/>
            <person name="Bizargity P."/>
            <person name="Bacino C.A."/>
            <person name="Leuzzi V."/>
            <person name="Martinelli S."/>
            <person name="Dallapiccola B."/>
            <person name="Tartaglia M."/>
            <person name="Blumkin L."/>
            <person name="Wierenga K.J."/>
            <person name="Purcarin G."/>
            <person name="O'Byrne J.J."/>
            <person name="Stockler S."/>
            <person name="Lehman A."/>
            <person name="Keren B."/>
            <person name="Nougues M.C."/>
            <person name="Mignot C."/>
            <person name="Auvin S."/>
            <person name="Nava C."/>
            <person name="Hiatt S.M."/>
            <person name="Bebin M."/>
            <person name="Shao Y."/>
            <person name="Scaglia F."/>
            <person name="Lalani S.R."/>
            <person name="Frye R.E."/>
            <person name="Jarjour I.T."/>
            <person name="Jacques S."/>
            <person name="Boucher R.M."/>
            <person name="Riou E."/>
            <person name="Srour M."/>
            <person name="Carmant L."/>
            <person name="Lortie A."/>
            <person name="Major P."/>
            <person name="Diadori P."/>
            <person name="Dubeau F."/>
            <person name="D'Anjou G."/>
            <person name="Bourque G."/>
            <person name="Berkovic S.F."/>
            <person name="Sadleir L.G."/>
            <person name="Campeau P.M."/>
            <person name="Kibar Z."/>
            <person name="Lafreniere R.G."/>
            <person name="Girard S.L."/>
            <person name="Mercimek-Mahmutoglu S."/>
            <person name="Boelman C."/>
            <person name="Rouleau G.A."/>
            <person name="Scheffer I.E."/>
            <person name="Mefford H.C."/>
            <person name="Andrade D.M."/>
            <person name="Rossignol E."/>
            <person name="Minassian B.A."/>
            <person name="Michaud J.L."/>
        </authorList>
    </citation>
    <scope>INVOLVEMENT IN IECEE2</scope>
    <scope>VARIANTS IECEE2 THR-79; HIS-244; SER-277; LYS-284; PRO-293; ARG-303; VAL-304 AND ILE-316</scope>
</reference>
<reference key="13">
    <citation type="journal article" date="2017" name="J. Med. Genet.">
        <title>A de novo missense mutation of GABRB2 causes early myoclonic encephalopathy.</title>
        <authorList>
            <person name="Ishii A."/>
            <person name="Kang J.Q."/>
            <person name="Schornak C.C."/>
            <person name="Hernandez C.C."/>
            <person name="Shen W."/>
            <person name="Watkins J.C."/>
            <person name="Macdonald R.L."/>
            <person name="Hirose S."/>
        </authorList>
    </citation>
    <scope>VARIANT IECEE2 PRO-287</scope>
    <scope>CHARACTERIZATION OF VARIANT IECEE2 PRO-287</scope>
    <scope>FUNCTION</scope>
</reference>
<proteinExistence type="evidence at protein level"/>
<protein>
    <recommendedName>
        <fullName evidence="22">Gamma-aminobutyric acid receptor subunit beta-2</fullName>
    </recommendedName>
    <alternativeName>
        <fullName>GABA(A) receptor subunit beta-2</fullName>
        <shortName evidence="21">GABAAR subunit beta-2</shortName>
    </alternativeName>
</protein>
<evidence type="ECO:0000250" key="1"/>
<evidence type="ECO:0000250" key="2">
    <source>
        <dbReference type="UniProtKB" id="P08219"/>
    </source>
</evidence>
<evidence type="ECO:0000250" key="3">
    <source>
        <dbReference type="UniProtKB" id="P0C2W5"/>
    </source>
</evidence>
<evidence type="ECO:0000250" key="4">
    <source>
        <dbReference type="UniProtKB" id="P15431"/>
    </source>
</evidence>
<evidence type="ECO:0000250" key="5">
    <source>
        <dbReference type="UniProtKB" id="P28472"/>
    </source>
</evidence>
<evidence type="ECO:0000250" key="6">
    <source>
        <dbReference type="UniProtKB" id="P63137"/>
    </source>
</evidence>
<evidence type="ECO:0000250" key="7">
    <source>
        <dbReference type="UniProtKB" id="P63138"/>
    </source>
</evidence>
<evidence type="ECO:0000255" key="8"/>
<evidence type="ECO:0000269" key="9">
    <source>
    </source>
</evidence>
<evidence type="ECO:0000269" key="10">
    <source>
    </source>
</evidence>
<evidence type="ECO:0000269" key="11">
    <source>
    </source>
</evidence>
<evidence type="ECO:0000269" key="12">
    <source>
    </source>
</evidence>
<evidence type="ECO:0000269" key="13">
    <source>
    </source>
</evidence>
<evidence type="ECO:0000269" key="14">
    <source>
    </source>
</evidence>
<evidence type="ECO:0000269" key="15">
    <source>
    </source>
</evidence>
<evidence type="ECO:0000269" key="16">
    <source>
    </source>
</evidence>
<evidence type="ECO:0000269" key="17">
    <source>
    </source>
</evidence>
<evidence type="ECO:0000303" key="18">
    <source>
    </source>
</evidence>
<evidence type="ECO:0000303" key="19">
    <source>
    </source>
</evidence>
<evidence type="ECO:0000303" key="20">
    <source>
    </source>
</evidence>
<evidence type="ECO:0000303" key="21">
    <source>
    </source>
</evidence>
<evidence type="ECO:0000303" key="22">
    <source>
    </source>
</evidence>
<evidence type="ECO:0000303" key="23">
    <source>
    </source>
</evidence>
<evidence type="ECO:0000303" key="24">
    <source>
    </source>
</evidence>
<evidence type="ECO:0000305" key="25"/>
<evidence type="ECO:0000312" key="26">
    <source>
        <dbReference type="HGNC" id="HGNC:4082"/>
    </source>
</evidence>
<evidence type="ECO:0007744" key="27">
    <source>
        <dbReference type="PDB" id="6D6T"/>
    </source>
</evidence>
<evidence type="ECO:0007744" key="28">
    <source>
        <dbReference type="PDB" id="6D6U"/>
    </source>
</evidence>
<evidence type="ECO:0007829" key="29">
    <source>
        <dbReference type="PDB" id="6X3T"/>
    </source>
</evidence>
<evidence type="ECO:0007829" key="30">
    <source>
        <dbReference type="PDB" id="6X40"/>
    </source>
</evidence>
<keyword id="KW-0002">3D-structure</keyword>
<keyword id="KW-0025">Alternative splicing</keyword>
<keyword id="KW-1003">Cell membrane</keyword>
<keyword id="KW-0868">Chloride</keyword>
<keyword id="KW-0869">Chloride channel</keyword>
<keyword id="KW-0968">Cytoplasmic vesicle</keyword>
<keyword id="KW-0225">Disease variant</keyword>
<keyword id="KW-1015">Disulfide bond</keyword>
<keyword id="KW-0887">Epilepsy</keyword>
<keyword id="KW-0325">Glycoprotein</keyword>
<keyword id="KW-0407">Ion channel</keyword>
<keyword id="KW-0406">Ion transport</keyword>
<keyword id="KW-1071">Ligand-gated ion channel</keyword>
<keyword id="KW-0472">Membrane</keyword>
<keyword id="KW-0597">Phosphoprotein</keyword>
<keyword id="KW-0628">Postsynaptic cell membrane</keyword>
<keyword id="KW-1267">Proteomics identification</keyword>
<keyword id="KW-0675">Receptor</keyword>
<keyword id="KW-1185">Reference proteome</keyword>
<keyword id="KW-0732">Signal</keyword>
<keyword id="KW-0770">Synapse</keyword>
<keyword id="KW-0812">Transmembrane</keyword>
<keyword id="KW-1133">Transmembrane helix</keyword>
<keyword id="KW-0813">Transport</keyword>
<organism>
    <name type="scientific">Homo sapiens</name>
    <name type="common">Human</name>
    <dbReference type="NCBI Taxonomy" id="9606"/>
    <lineage>
        <taxon>Eukaryota</taxon>
        <taxon>Metazoa</taxon>
        <taxon>Chordata</taxon>
        <taxon>Craniata</taxon>
        <taxon>Vertebrata</taxon>
        <taxon>Euteleostomi</taxon>
        <taxon>Mammalia</taxon>
        <taxon>Eutheria</taxon>
        <taxon>Euarchontoglires</taxon>
        <taxon>Primates</taxon>
        <taxon>Haplorrhini</taxon>
        <taxon>Catarrhini</taxon>
        <taxon>Hominidae</taxon>
        <taxon>Homo</taxon>
    </lineage>
</organism>
<gene>
    <name evidence="26" type="primary">GABRB2</name>
</gene>
<sequence>MWRVRKRGYFGIWSFPLIIAAVCAQSVNDPSNMSLVKETVDRLLKGYDIRLRPDFGGPPVAVGMNIDIASIDMVSEVNMDYTLTMYFQQAWRDKRLSYNVIPLNLTLDNRVADQLWVPDTYFLNDKKSFVHGVTVKNRMIRLHPDGTVLYGLRITTTAACMMDLRRYPLDEQNCTLEIESYGYTTDDIEFYWRGDDNAVTGVTKIELPQFSIVDYKLITKKVVFSTGSYPRLSLSFKLKRNIGYFILQTYMPSILITILSWVSFWINYDASAARVALGITTVLTMTTINTHLRETLPKIPYVKAIDMYLMGCFVFVFMALLEYALVNYIFFGRGPQRQKKAAEKAASANNEKMRLDVNKIFYKDIKQNGTQYRSLWDPTGNLSPTRRTTNYDFSLYTMDPHENILLSTLEIKNEMATSEAVMGLGDPRSTMLAYDASSIQYRKAGLPRHSFGRNALERHVAQKKSRLRRRASQLKITIPDLTDVNAIDRWSRIFFPVVFSFFNIVYWLYYVN</sequence>
<accession>P47870</accession>
<accession>A8K115</accession>
<accession>A8K1A0</accession>
<accession>D1LYT0</accession>
<accession>D1LYT1</accession>
<accession>Q16323</accession>
<accession>Q4FZB2</accession>
<dbReference type="EMBL" id="S67368">
    <property type="protein sequence ID" value="AAB29370.1"/>
    <property type="molecule type" value="mRNA"/>
</dbReference>
<dbReference type="EMBL" id="S77554">
    <property type="protein sequence ID" value="AAB33983.1"/>
    <property type="molecule type" value="mRNA"/>
</dbReference>
<dbReference type="EMBL" id="S77553">
    <property type="protein sequence ID" value="AAB33982.1"/>
    <property type="molecule type" value="mRNA"/>
</dbReference>
<dbReference type="EMBL" id="GU086163">
    <property type="protein sequence ID" value="ACY69094.1"/>
    <property type="molecule type" value="mRNA"/>
</dbReference>
<dbReference type="EMBL" id="GU086164">
    <property type="protein sequence ID" value="ACY69095.1"/>
    <property type="molecule type" value="mRNA"/>
</dbReference>
<dbReference type="EMBL" id="AK289730">
    <property type="protein sequence ID" value="BAF82419.1"/>
    <property type="molecule type" value="mRNA"/>
</dbReference>
<dbReference type="EMBL" id="AK289815">
    <property type="protein sequence ID" value="BAF82504.1"/>
    <property type="molecule type" value="mRNA"/>
</dbReference>
<dbReference type="EMBL" id="CH471062">
    <property type="protein sequence ID" value="EAW61543.1"/>
    <property type="molecule type" value="Genomic_DNA"/>
</dbReference>
<dbReference type="EMBL" id="BC099705">
    <property type="protein sequence ID" value="AAH99705.1"/>
    <property type="molecule type" value="mRNA"/>
</dbReference>
<dbReference type="EMBL" id="BC099719">
    <property type="protein sequence ID" value="AAH99719.1"/>
    <property type="molecule type" value="mRNA"/>
</dbReference>
<dbReference type="EMBL" id="BC105639">
    <property type="protein sequence ID" value="AAI05640.1"/>
    <property type="molecule type" value="mRNA"/>
</dbReference>
<dbReference type="CCDS" id="CCDS4354.1">
    <molecule id="P47870-1"/>
</dbReference>
<dbReference type="CCDS" id="CCDS4355.1">
    <molecule id="P47870-2"/>
</dbReference>
<dbReference type="PIR" id="I52656">
    <property type="entry name" value="I52656"/>
</dbReference>
<dbReference type="RefSeq" id="NP_000804.1">
    <molecule id="P47870-1"/>
    <property type="nucleotide sequence ID" value="NM_000813.3"/>
</dbReference>
<dbReference type="RefSeq" id="NP_001358656.1">
    <molecule id="P47870-2"/>
    <property type="nucleotide sequence ID" value="NM_001371727.1"/>
</dbReference>
<dbReference type="RefSeq" id="NP_068711.1">
    <molecule id="P47870-2"/>
    <property type="nucleotide sequence ID" value="NM_021911.3"/>
</dbReference>
<dbReference type="RefSeq" id="XP_054208281.1">
    <molecule id="P47870-2"/>
    <property type="nucleotide sequence ID" value="XM_054352306.1"/>
</dbReference>
<dbReference type="RefSeq" id="XP_054208282.1">
    <molecule id="P47870-2"/>
    <property type="nucleotide sequence ID" value="XM_054352307.1"/>
</dbReference>
<dbReference type="RefSeq" id="XP_054208283.1">
    <molecule id="P47870-2"/>
    <property type="nucleotide sequence ID" value="XM_054352308.1"/>
</dbReference>
<dbReference type="RefSeq" id="XP_054208284.1">
    <molecule id="P47870-1"/>
    <property type="nucleotide sequence ID" value="XM_054352309.1"/>
</dbReference>
<dbReference type="RefSeq" id="XP_054208285.1">
    <molecule id="P47870-1"/>
    <property type="nucleotide sequence ID" value="XM_054352310.1"/>
</dbReference>
<dbReference type="RefSeq" id="XP_054208286.1">
    <molecule id="P47870-1"/>
    <property type="nucleotide sequence ID" value="XM_054352311.1"/>
</dbReference>
<dbReference type="RefSeq" id="XP_054208287.1">
    <molecule id="P47870-1"/>
    <property type="nucleotide sequence ID" value="XM_054352312.1"/>
</dbReference>
<dbReference type="RefSeq" id="XP_054208288.1">
    <molecule id="P47870-1"/>
    <property type="nucleotide sequence ID" value="XM_054352313.1"/>
</dbReference>
<dbReference type="PDB" id="6D6T">
    <property type="method" value="EM"/>
    <property type="resolution" value="3.80 A"/>
    <property type="chains" value="A/C=25-331"/>
</dbReference>
<dbReference type="PDB" id="6D6U">
    <property type="method" value="EM"/>
    <property type="resolution" value="3.80 A"/>
    <property type="chains" value="A/C=25-331"/>
</dbReference>
<dbReference type="PDB" id="6X3S">
    <property type="method" value="EM"/>
    <property type="resolution" value="3.12 A"/>
    <property type="chains" value="A/C=25-331, A/C=487-512"/>
</dbReference>
<dbReference type="PDB" id="6X3T">
    <property type="method" value="EM"/>
    <property type="resolution" value="2.55 A"/>
    <property type="chains" value="A/C=25-331, A/C=487-512"/>
</dbReference>
<dbReference type="PDB" id="6X3U">
    <property type="method" value="EM"/>
    <property type="resolution" value="3.49 A"/>
    <property type="chains" value="A/C=25-331, A/C=487-512"/>
</dbReference>
<dbReference type="PDB" id="6X3V">
    <property type="method" value="EM"/>
    <property type="resolution" value="3.50 A"/>
    <property type="chains" value="A/C=25-331, A/C=487-512"/>
</dbReference>
<dbReference type="PDB" id="6X3W">
    <property type="method" value="EM"/>
    <property type="resolution" value="3.30 A"/>
    <property type="chains" value="A/C=25-331, A/C=487-512"/>
</dbReference>
<dbReference type="PDB" id="6X3X">
    <property type="method" value="EM"/>
    <property type="resolution" value="2.92 A"/>
    <property type="chains" value="A/C=25-331, A/C=487-512"/>
</dbReference>
<dbReference type="PDB" id="6X3Z">
    <property type="method" value="EM"/>
    <property type="resolution" value="3.23 A"/>
    <property type="chains" value="A/C=25-331, A/C=487-512"/>
</dbReference>
<dbReference type="PDB" id="6X40">
    <property type="method" value="EM"/>
    <property type="resolution" value="2.86 A"/>
    <property type="chains" value="A/C=25-331, A/C=487-512"/>
</dbReference>
<dbReference type="PDB" id="7T0W">
    <property type="method" value="EM"/>
    <property type="resolution" value="3.00 A"/>
    <property type="chains" value="A/C=25-331"/>
</dbReference>
<dbReference type="PDB" id="7T0Z">
    <property type="method" value="EM"/>
    <property type="resolution" value="3.00 A"/>
    <property type="chains" value="A/C=25-331"/>
</dbReference>
<dbReference type="PDB" id="8DD2">
    <property type="method" value="EM"/>
    <property type="resolution" value="2.90 A"/>
    <property type="chains" value="A/C=25-331"/>
</dbReference>
<dbReference type="PDB" id="8DD3">
    <property type="method" value="EM"/>
    <property type="resolution" value="2.90 A"/>
    <property type="chains" value="A/C=25-331"/>
</dbReference>
<dbReference type="PDB" id="8SGO">
    <property type="method" value="EM"/>
    <property type="resolution" value="2.65 A"/>
    <property type="chains" value="A/C=25-331"/>
</dbReference>
<dbReference type="PDB" id="8SI9">
    <property type="method" value="EM"/>
    <property type="resolution" value="2.98 A"/>
    <property type="chains" value="A/C=25-331"/>
</dbReference>
<dbReference type="PDB" id="8SID">
    <property type="method" value="EM"/>
    <property type="resolution" value="2.71 A"/>
    <property type="chains" value="A/C=25-331"/>
</dbReference>
<dbReference type="PDB" id="8VQY">
    <property type="method" value="EM"/>
    <property type="resolution" value="2.82 A"/>
    <property type="chains" value="A/C=25-331"/>
</dbReference>
<dbReference type="PDB" id="8VRN">
    <property type="method" value="EM"/>
    <property type="resolution" value="2.57 A"/>
    <property type="chains" value="A/C=25-331"/>
</dbReference>
<dbReference type="PDB" id="9CRS">
    <property type="method" value="EM"/>
    <property type="resolution" value="2.90 A"/>
    <property type="chains" value="A/C=25-512"/>
</dbReference>
<dbReference type="PDB" id="9CRV">
    <property type="method" value="EM"/>
    <property type="resolution" value="3.18 A"/>
    <property type="chains" value="A/D=25-512"/>
</dbReference>
<dbReference type="PDB" id="9CSB">
    <property type="method" value="EM"/>
    <property type="resolution" value="3.34 A"/>
    <property type="chains" value="C=25-512"/>
</dbReference>
<dbReference type="PDB" id="9CT0">
    <property type="method" value="EM"/>
    <property type="resolution" value="3.19 A"/>
    <property type="chains" value="A/C=25-512"/>
</dbReference>
<dbReference type="PDB" id="9CTJ">
    <property type="method" value="EM"/>
    <property type="resolution" value="3.74 A"/>
    <property type="chains" value="A=25-512"/>
</dbReference>
<dbReference type="PDB" id="9CTP">
    <property type="method" value="EM"/>
    <property type="resolution" value="3.62 A"/>
    <property type="chains" value="A/C=26-512"/>
</dbReference>
<dbReference type="PDB" id="9CTV">
    <property type="method" value="EM"/>
    <property type="resolution" value="3.36 A"/>
    <property type="chains" value="A=26-512"/>
</dbReference>
<dbReference type="PDB" id="9CXA">
    <property type="method" value="EM"/>
    <property type="resolution" value="3.04 A"/>
    <property type="chains" value="A=1-512"/>
</dbReference>
<dbReference type="PDB" id="9CXB">
    <property type="method" value="EM"/>
    <property type="resolution" value="3.33 A"/>
    <property type="chains" value="A=25-512"/>
</dbReference>
<dbReference type="PDB" id="9CXC">
    <property type="method" value="EM"/>
    <property type="resolution" value="3.30 A"/>
    <property type="chains" value="D=25-512"/>
</dbReference>
<dbReference type="PDB" id="9CXD">
    <property type="method" value="EM"/>
    <property type="resolution" value="3.36 A"/>
    <property type="chains" value="A=26-512"/>
</dbReference>
<dbReference type="PDB" id="9DRX">
    <property type="method" value="EM"/>
    <property type="resolution" value="2.95 A"/>
    <property type="chains" value="A/C=25-331, A/C=487-512"/>
</dbReference>
<dbReference type="PDBsum" id="6D6T"/>
<dbReference type="PDBsum" id="6D6U"/>
<dbReference type="PDBsum" id="6X3S"/>
<dbReference type="PDBsum" id="6X3T"/>
<dbReference type="PDBsum" id="6X3U"/>
<dbReference type="PDBsum" id="6X3V"/>
<dbReference type="PDBsum" id="6X3W"/>
<dbReference type="PDBsum" id="6X3X"/>
<dbReference type="PDBsum" id="6X3Z"/>
<dbReference type="PDBsum" id="6X40"/>
<dbReference type="PDBsum" id="7T0W"/>
<dbReference type="PDBsum" id="7T0Z"/>
<dbReference type="PDBsum" id="8DD2"/>
<dbReference type="PDBsum" id="8DD3"/>
<dbReference type="PDBsum" id="8SGO"/>
<dbReference type="PDBsum" id="8SI9"/>
<dbReference type="PDBsum" id="8SID"/>
<dbReference type="PDBsum" id="8VQY"/>
<dbReference type="PDBsum" id="8VRN"/>
<dbReference type="PDBsum" id="9CRS"/>
<dbReference type="PDBsum" id="9CRV"/>
<dbReference type="PDBsum" id="9CSB"/>
<dbReference type="PDBsum" id="9CT0"/>
<dbReference type="PDBsum" id="9CTJ"/>
<dbReference type="PDBsum" id="9CTP"/>
<dbReference type="PDBsum" id="9CTV"/>
<dbReference type="PDBsum" id="9CXA"/>
<dbReference type="PDBsum" id="9CXB"/>
<dbReference type="PDBsum" id="9CXC"/>
<dbReference type="PDBsum" id="9CXD"/>
<dbReference type="PDBsum" id="9DRX"/>
<dbReference type="EMDB" id="EMD-22031"/>
<dbReference type="EMDB" id="EMD-22032"/>
<dbReference type="EMDB" id="EMD-22033"/>
<dbReference type="EMDB" id="EMD-22034"/>
<dbReference type="EMDB" id="EMD-22035"/>
<dbReference type="EMDB" id="EMD-22036"/>
<dbReference type="EMDB" id="EMD-22037"/>
<dbReference type="EMDB" id="EMD-22038"/>
<dbReference type="EMDB" id="EMD-25583"/>
<dbReference type="EMDB" id="EMD-25585"/>
<dbReference type="EMDB" id="EMD-27332"/>
<dbReference type="EMDB" id="EMD-27333"/>
<dbReference type="EMDB" id="EMD-40462"/>
<dbReference type="EMDB" id="EMD-40503"/>
<dbReference type="EMDB" id="EMD-40506"/>
<dbReference type="EMDB" id="EMD-43475"/>
<dbReference type="EMDB" id="EMD-43485"/>
<dbReference type="EMDB" id="EMD-45878"/>
<dbReference type="EMDB" id="EMD-45884"/>
<dbReference type="EMDB" id="EMD-45890"/>
<dbReference type="EMDB" id="EMD-45894"/>
<dbReference type="EMDB" id="EMD-45908"/>
<dbReference type="EMDB" id="EMD-45914"/>
<dbReference type="EMDB" id="EMD-45920"/>
<dbReference type="EMDB" id="EMD-45983"/>
<dbReference type="EMDB" id="EMD-45984"/>
<dbReference type="EMDB" id="EMD-45985"/>
<dbReference type="EMDB" id="EMD-45986"/>
<dbReference type="EMDB" id="EMD-47132"/>
<dbReference type="EMDB" id="EMD-7816"/>
<dbReference type="EMDB" id="EMD-7817"/>
<dbReference type="SMR" id="P47870"/>
<dbReference type="BioGRID" id="108835">
    <property type="interactions" value="8"/>
</dbReference>
<dbReference type="ComplexPortal" id="CPX-2159">
    <property type="entry name" value="GABA-A receptor, alpha1-beta2-gamma2"/>
</dbReference>
<dbReference type="ComplexPortal" id="CPX-2952">
    <property type="entry name" value="GABA-A receptor, alpha6-beta2-delta"/>
</dbReference>
<dbReference type="ComplexPortal" id="CPX-2953">
    <property type="entry name" value="GABA-A receptor, alpha4-beta2-delta"/>
</dbReference>
<dbReference type="ComplexPortal" id="CPX-8574">
    <property type="entry name" value="GABA-A receptor, alpha4-beta2-gamma2"/>
</dbReference>
<dbReference type="ComplexPortal" id="CPX-8576">
    <property type="entry name" value="GABA-A receptor, alpha5-beta2-gamma2"/>
</dbReference>
<dbReference type="ComplexPortal" id="CPX-8577">
    <property type="entry name" value="GABA-A receptor, alpha2-beta2-gamma2"/>
</dbReference>
<dbReference type="ComplexPortal" id="CPX-8578">
    <property type="entry name" value="GABA-A receptor, alpha1-beta2-delta"/>
</dbReference>
<dbReference type="ComplexPortal" id="CPX-8580">
    <property type="entry name" value="GABA-A receptor, alpha3-beta2-gamma2"/>
</dbReference>
<dbReference type="ComplexPortal" id="CPX-8581">
    <property type="entry name" value="GABA-A receptor alpha6-beta2-gamma2"/>
</dbReference>
<dbReference type="CORUM" id="P47870"/>
<dbReference type="FunCoup" id="P47870">
    <property type="interactions" value="748"/>
</dbReference>
<dbReference type="IntAct" id="P47870">
    <property type="interactions" value="4"/>
</dbReference>
<dbReference type="MINT" id="P47870"/>
<dbReference type="STRING" id="9606.ENSP00000274547"/>
<dbReference type="BindingDB" id="P47870"/>
<dbReference type="ChEMBL" id="CHEMBL1920"/>
<dbReference type="DrugBank" id="DB12537">
    <property type="generic name" value="1,2-Benzodiazepine"/>
</dbReference>
<dbReference type="DrugBank" id="DB00546">
    <property type="generic name" value="Adinazolam"/>
</dbReference>
<dbReference type="DrugBank" id="DB00404">
    <property type="generic name" value="Alprazolam"/>
</dbReference>
<dbReference type="DrugBank" id="DB00543">
    <property type="generic name" value="Amoxapine"/>
</dbReference>
<dbReference type="DrugBank" id="DB11901">
    <property type="generic name" value="Apalutamide"/>
</dbReference>
<dbReference type="DrugBank" id="DB14719">
    <property type="generic name" value="Bentazepam"/>
</dbReference>
<dbReference type="DrugBank" id="DB11859">
    <property type="generic name" value="Brexanolone"/>
</dbReference>
<dbReference type="DrugBank" id="DB01558">
    <property type="generic name" value="Bromazepam"/>
</dbReference>
<dbReference type="DrugBank" id="DB09017">
    <property type="generic name" value="Brotizolam"/>
</dbReference>
<dbReference type="DrugBank" id="DB00237">
    <property type="generic name" value="Butabarbital"/>
</dbReference>
<dbReference type="DrugBank" id="DB00241">
    <property type="generic name" value="Butalbital"/>
</dbReference>
<dbReference type="DrugBank" id="DB01489">
    <property type="generic name" value="Camazepam"/>
</dbReference>
<dbReference type="DrugBank" id="DB00395">
    <property type="generic name" value="Carisoprodol"/>
</dbReference>
<dbReference type="DrugBank" id="DB00475">
    <property type="generic name" value="Chlordiazepoxide"/>
</dbReference>
<dbReference type="DrugBank" id="DB14715">
    <property type="generic name" value="Cinazepam"/>
</dbReference>
<dbReference type="DrugBank" id="DB01594">
    <property type="generic name" value="Cinolazepam"/>
</dbReference>
<dbReference type="DrugBank" id="DB00349">
    <property type="generic name" value="Clobazam"/>
</dbReference>
<dbReference type="DrugBank" id="DB01068">
    <property type="generic name" value="Clonazepam"/>
</dbReference>
<dbReference type="DrugBank" id="DB00628">
    <property type="generic name" value="Clorazepic acid"/>
</dbReference>
<dbReference type="DrugBank" id="DB01559">
    <property type="generic name" value="Clotiazepam"/>
</dbReference>
<dbReference type="DrugBank" id="DB01553">
    <property type="generic name" value="Cloxazolam"/>
</dbReference>
<dbReference type="DrugBank" id="DB01511">
    <property type="generic name" value="Delorazepam"/>
</dbReference>
<dbReference type="DrugBank" id="DB01189">
    <property type="generic name" value="Desflurane"/>
</dbReference>
<dbReference type="DrugBank" id="DB00829">
    <property type="generic name" value="Diazepam"/>
</dbReference>
<dbReference type="DrugBank" id="DB13837">
    <property type="generic name" value="Doxefazepam"/>
</dbReference>
<dbReference type="DrugBank" id="DB12308">
    <property type="generic name" value="Eltanolone"/>
</dbReference>
<dbReference type="DrugBank" id="DB00228">
    <property type="generic name" value="Enflurane"/>
</dbReference>
<dbReference type="DrugBank" id="DB01215">
    <property type="generic name" value="Estazolam"/>
</dbReference>
<dbReference type="DrugBank" id="DB00402">
    <property type="generic name" value="Eszopiclone"/>
</dbReference>
<dbReference type="DrugBank" id="DB00898">
    <property type="generic name" value="Ethanol"/>
</dbReference>
<dbReference type="DrugBank" id="DB00189">
    <property type="generic name" value="Ethchlorvynol"/>
</dbReference>
<dbReference type="DrugBank" id="DB01545">
    <property type="generic name" value="Ethyl loflazepate"/>
</dbReference>
<dbReference type="DrugBank" id="DB09166">
    <property type="generic name" value="Etizolam"/>
</dbReference>
<dbReference type="DrugBank" id="DB00292">
    <property type="generic name" value="Etomidate"/>
</dbReference>
<dbReference type="DrugBank" id="DB01567">
    <property type="generic name" value="Fludiazepam"/>
</dbReference>
<dbReference type="DrugBank" id="DB01205">
    <property type="generic name" value="Flumazenil"/>
</dbReference>
<dbReference type="DrugBank" id="DB01544">
    <property type="generic name" value="Flunitrazepam"/>
</dbReference>
<dbReference type="DrugBank" id="DB00690">
    <property type="generic name" value="Flurazepam"/>
</dbReference>
<dbReference type="DrugBank" id="DB06716">
    <property type="generic name" value="Fospropofol"/>
</dbReference>
<dbReference type="DrugBank" id="DB02530">
    <property type="generic name" value="gamma-Aminobutyric acid"/>
</dbReference>
<dbReference type="DrugBank" id="DB05087">
    <property type="generic name" value="Ganaxolone"/>
</dbReference>
<dbReference type="DrugBank" id="DB01381">
    <property type="generic name" value="Ginkgo biloba"/>
</dbReference>
<dbReference type="DrugBank" id="DB01437">
    <property type="generic name" value="Glutethimide"/>
</dbReference>
<dbReference type="DrugBank" id="DB00801">
    <property type="generic name" value="Halazepam"/>
</dbReference>
<dbReference type="DrugBank" id="DB01159">
    <property type="generic name" value="Halothane"/>
</dbReference>
<dbReference type="DrugBank" id="DB00753">
    <property type="generic name" value="Isoflurane"/>
</dbReference>
<dbReference type="DrugBank" id="DB01587">
    <property type="generic name" value="Ketazolam"/>
</dbReference>
<dbReference type="DrugBank" id="DB00555">
    <property type="generic name" value="Lamotrigine"/>
</dbReference>
<dbReference type="DrugBank" id="DB13643">
    <property type="generic name" value="Loprazolam"/>
</dbReference>
<dbReference type="DrugBank" id="DB00186">
    <property type="generic name" value="Lorazepam"/>
</dbReference>
<dbReference type="DrugBank" id="DB13872">
    <property type="generic name" value="Lormetazepam"/>
</dbReference>
<dbReference type="DrugBank" id="DB13437">
    <property type="generic name" value="Medazepam"/>
</dbReference>
<dbReference type="DrugBank" id="DB00603">
    <property type="generic name" value="Medroxyprogesterone acetate"/>
</dbReference>
<dbReference type="DrugBank" id="DB01043">
    <property type="generic name" value="Memantine"/>
</dbReference>
<dbReference type="DrugBank" id="DB00371">
    <property type="generic name" value="Meprobamate"/>
</dbReference>
<dbReference type="DrugBank" id="DB00463">
    <property type="generic name" value="Metharbital"/>
</dbReference>
<dbReference type="DrugBank" id="DB01028">
    <property type="generic name" value="Methoxyflurane"/>
</dbReference>
<dbReference type="DrugBank" id="DB01107">
    <property type="generic name" value="Methyprylon"/>
</dbReference>
<dbReference type="DrugBank" id="DB15489">
    <property type="generic name" value="Mexazolam"/>
</dbReference>
<dbReference type="DrugBank" id="DB00683">
    <property type="generic name" value="Midazolam"/>
</dbReference>
<dbReference type="DrugBank" id="DB01595">
    <property type="generic name" value="Nitrazepam"/>
</dbReference>
<dbReference type="DrugBank" id="DB14028">
    <property type="generic name" value="Nordazepam"/>
</dbReference>
<dbReference type="DrugBank" id="DB00842">
    <property type="generic name" value="Oxazepam"/>
</dbReference>
<dbReference type="DrugBank" id="DB14672">
    <property type="generic name" value="Oxazepam acetate"/>
</dbReference>
<dbReference type="DrugBank" id="DB00312">
    <property type="generic name" value="Pentobarbital"/>
</dbReference>
<dbReference type="DrugBank" id="DB00252">
    <property type="generic name" value="Phenytoin"/>
</dbReference>
<dbReference type="DrugBank" id="DB13335">
    <property type="generic name" value="Pinazepam"/>
</dbReference>
<dbReference type="DrugBank" id="DB01708">
    <property type="generic name" value="Prasterone"/>
</dbReference>
<dbReference type="DrugBank" id="DB01588">
    <property type="generic name" value="Prazepam"/>
</dbReference>
<dbReference type="DrugBank" id="DB00794">
    <property type="generic name" value="Primidone"/>
</dbReference>
<dbReference type="DrugBank" id="DB00818">
    <property type="generic name" value="Propofol"/>
</dbReference>
<dbReference type="DrugBank" id="DB01589">
    <property type="generic name" value="Quazepam"/>
</dbReference>
<dbReference type="DrugBank" id="DB12404">
    <property type="generic name" value="Remimazolam"/>
</dbReference>
<dbReference type="DrugBank" id="DB01236">
    <property type="generic name" value="Sevoflurane"/>
</dbReference>
<dbReference type="DrugBank" id="DB09118">
    <property type="generic name" value="Stiripentol"/>
</dbReference>
<dbReference type="DrugBank" id="DB00306">
    <property type="generic name" value="Talbutal"/>
</dbReference>
<dbReference type="DrugBank" id="DB01956">
    <property type="generic name" value="Taurine"/>
</dbReference>
<dbReference type="DrugBank" id="DB00231">
    <property type="generic name" value="Temazepam"/>
</dbReference>
<dbReference type="DrugBank" id="DB11582">
    <property type="generic name" value="Thiocolchicoside"/>
</dbReference>
<dbReference type="DrugBank" id="DB00897">
    <property type="generic name" value="Triazolam"/>
</dbReference>
<dbReference type="DrugBank" id="DB17063">
    <property type="generic name" value="ZK-93423"/>
</dbReference>
<dbReference type="DrugBank" id="DB15490">
    <property type="generic name" value="Zuranolone"/>
</dbReference>
<dbReference type="DrugCentral" id="P47870"/>
<dbReference type="TCDB" id="1.A.9.5.2">
    <property type="family name" value="the neurotransmitter receptor, cys loop, ligand-gated ion channel (lic) family"/>
</dbReference>
<dbReference type="GlyCosmos" id="P47870">
    <property type="glycosylation" value="3 sites, No reported glycans"/>
</dbReference>
<dbReference type="GlyGen" id="P47870">
    <property type="glycosylation" value="3 sites"/>
</dbReference>
<dbReference type="iPTMnet" id="P47870"/>
<dbReference type="PhosphoSitePlus" id="P47870"/>
<dbReference type="BioMuta" id="GABRB2"/>
<dbReference type="DMDM" id="292495010"/>
<dbReference type="MassIVE" id="P47870"/>
<dbReference type="PaxDb" id="9606-ENSP00000274547"/>
<dbReference type="PeptideAtlas" id="P47870"/>
<dbReference type="ProteomicsDB" id="55801">
    <molecule id="P47870-2"/>
</dbReference>
<dbReference type="ProteomicsDB" id="55802">
    <molecule id="P47870-1"/>
</dbReference>
<dbReference type="ProteomicsDB" id="55803">
    <molecule id="P47870-3"/>
</dbReference>
<dbReference type="ProteomicsDB" id="55804">
    <molecule id="P47870-4"/>
</dbReference>
<dbReference type="Antibodypedia" id="4534">
    <property type="antibodies" value="334 antibodies from 34 providers"/>
</dbReference>
<dbReference type="DNASU" id="2561"/>
<dbReference type="Ensembl" id="ENST00000274547.7">
    <molecule id="P47870-2"/>
    <property type="protein sequence ID" value="ENSP00000274547.2"/>
    <property type="gene ID" value="ENSG00000145864.14"/>
</dbReference>
<dbReference type="Ensembl" id="ENST00000353437.10">
    <molecule id="P47870-1"/>
    <property type="protein sequence ID" value="ENSP00000274546.6"/>
    <property type="gene ID" value="ENSG00000145864.14"/>
</dbReference>
<dbReference type="Ensembl" id="ENST00000393959.6">
    <molecule id="P47870-2"/>
    <property type="protein sequence ID" value="ENSP00000377531.1"/>
    <property type="gene ID" value="ENSG00000145864.14"/>
</dbReference>
<dbReference type="Ensembl" id="ENST00000520240.5">
    <molecule id="P47870-1"/>
    <property type="protein sequence ID" value="ENSP00000429320.1"/>
    <property type="gene ID" value="ENSG00000145864.14"/>
</dbReference>
<dbReference type="Ensembl" id="ENST00000675303.1">
    <molecule id="P47870-1"/>
    <property type="protein sequence ID" value="ENSP00000502748.1"/>
    <property type="gene ID" value="ENSG00000145864.14"/>
</dbReference>
<dbReference type="Ensembl" id="ENST00000675773.1">
    <molecule id="P47870-1"/>
    <property type="protein sequence ID" value="ENSP00000502701.1"/>
    <property type="gene ID" value="ENSG00000145864.14"/>
</dbReference>
<dbReference type="GeneID" id="2561"/>
<dbReference type="KEGG" id="hsa:2561"/>
<dbReference type="MANE-Select" id="ENST00000393959.6">
    <property type="protein sequence ID" value="ENSP00000377531.1"/>
    <property type="RefSeq nucleotide sequence ID" value="NM_001371727.1"/>
    <property type="RefSeq protein sequence ID" value="NP_001358656.1"/>
</dbReference>
<dbReference type="UCSC" id="uc003lyr.2">
    <molecule id="P47870-2"/>
    <property type="organism name" value="human"/>
</dbReference>
<dbReference type="AGR" id="HGNC:4082"/>
<dbReference type="CTD" id="2561"/>
<dbReference type="DisGeNET" id="2561"/>
<dbReference type="GeneCards" id="GABRB2"/>
<dbReference type="HGNC" id="HGNC:4082">
    <property type="gene designation" value="GABRB2"/>
</dbReference>
<dbReference type="HPA" id="ENSG00000145864">
    <property type="expression patterns" value="Tissue enriched (brain)"/>
</dbReference>
<dbReference type="MalaCards" id="GABRB2"/>
<dbReference type="MIM" id="600232">
    <property type="type" value="gene"/>
</dbReference>
<dbReference type="MIM" id="617829">
    <property type="type" value="phenotype"/>
</dbReference>
<dbReference type="neXtProt" id="NX_P47870"/>
<dbReference type="OpenTargets" id="ENSG00000145864"/>
<dbReference type="Orphanet" id="442835">
    <property type="disease" value="Non-specific early-onset epileptic encephalopathy"/>
</dbReference>
<dbReference type="PharmGKB" id="PA28496"/>
<dbReference type="VEuPathDB" id="HostDB:ENSG00000145864"/>
<dbReference type="eggNOG" id="KOG3643">
    <property type="taxonomic scope" value="Eukaryota"/>
</dbReference>
<dbReference type="GeneTree" id="ENSGT00940000154245"/>
<dbReference type="HOGENOM" id="CLU_010920_1_4_1"/>
<dbReference type="InParanoid" id="P47870"/>
<dbReference type="OMA" id="INKMDPH"/>
<dbReference type="OrthoDB" id="8890589at2759"/>
<dbReference type="PAN-GO" id="P47870">
    <property type="GO annotations" value="13 GO annotations based on evolutionary models"/>
</dbReference>
<dbReference type="PhylomeDB" id="P47870"/>
<dbReference type="TreeFam" id="TF315453"/>
<dbReference type="PathwayCommons" id="P47870"/>
<dbReference type="Reactome" id="R-HSA-1236394">
    <property type="pathway name" value="Signaling by ERBB4"/>
</dbReference>
<dbReference type="Reactome" id="R-HSA-977443">
    <property type="pathway name" value="GABA receptor activation"/>
</dbReference>
<dbReference type="SignaLink" id="P47870"/>
<dbReference type="SIGNOR" id="P47870"/>
<dbReference type="BioGRID-ORCS" id="2561">
    <property type="hits" value="10 hits in 1156 CRISPR screens"/>
</dbReference>
<dbReference type="ChiTaRS" id="GABRB2">
    <property type="organism name" value="human"/>
</dbReference>
<dbReference type="GeneWiki" id="GABRB2"/>
<dbReference type="GenomeRNAi" id="2561"/>
<dbReference type="Pharos" id="P47870">
    <property type="development level" value="Tclin"/>
</dbReference>
<dbReference type="PRO" id="PR:P47870"/>
<dbReference type="Proteomes" id="UP000005640">
    <property type="component" value="Chromosome 5"/>
</dbReference>
<dbReference type="RNAct" id="P47870">
    <property type="molecule type" value="protein"/>
</dbReference>
<dbReference type="Bgee" id="ENSG00000145864">
    <property type="expression patterns" value="Expressed in Brodmann (1909) area 23 and 142 other cell types or tissues"/>
</dbReference>
<dbReference type="ExpressionAtlas" id="P47870">
    <property type="expression patterns" value="baseline and differential"/>
</dbReference>
<dbReference type="GO" id="GO:0034707">
    <property type="term" value="C:chloride channel complex"/>
    <property type="evidence" value="ECO:0007669"/>
    <property type="project" value="UniProtKB-KW"/>
</dbReference>
<dbReference type="GO" id="GO:0030659">
    <property type="term" value="C:cytoplasmic vesicle membrane"/>
    <property type="evidence" value="ECO:0007669"/>
    <property type="project" value="UniProtKB-SubCell"/>
</dbReference>
<dbReference type="GO" id="GO:0043197">
    <property type="term" value="C:dendritic spine"/>
    <property type="evidence" value="ECO:0000314"/>
    <property type="project" value="UniProt"/>
</dbReference>
<dbReference type="GO" id="GO:0070062">
    <property type="term" value="C:extracellular exosome"/>
    <property type="evidence" value="ECO:0007005"/>
    <property type="project" value="UniProtKB"/>
</dbReference>
<dbReference type="GO" id="GO:1902711">
    <property type="term" value="C:GABA-A receptor complex"/>
    <property type="evidence" value="ECO:0000353"/>
    <property type="project" value="ComplexPortal"/>
</dbReference>
<dbReference type="GO" id="GO:0098982">
    <property type="term" value="C:GABA-ergic synapse"/>
    <property type="evidence" value="ECO:0007669"/>
    <property type="project" value="Ensembl"/>
</dbReference>
<dbReference type="GO" id="GO:0005886">
    <property type="term" value="C:plasma membrane"/>
    <property type="evidence" value="ECO:0000314"/>
    <property type="project" value="UniProtKB"/>
</dbReference>
<dbReference type="GO" id="GO:0045211">
    <property type="term" value="C:postsynaptic membrane"/>
    <property type="evidence" value="ECO:0000314"/>
    <property type="project" value="UniProt"/>
</dbReference>
<dbReference type="GO" id="GO:0099634">
    <property type="term" value="C:postsynaptic specialization membrane"/>
    <property type="evidence" value="ECO:0000250"/>
    <property type="project" value="UniProtKB"/>
</dbReference>
<dbReference type="GO" id="GO:0005254">
    <property type="term" value="F:chloride channel activity"/>
    <property type="evidence" value="ECO:0000250"/>
    <property type="project" value="UniProtKB"/>
</dbReference>
<dbReference type="GO" id="GO:0004890">
    <property type="term" value="F:GABA-A receptor activity"/>
    <property type="evidence" value="ECO:0000250"/>
    <property type="project" value="BHF-UCL"/>
</dbReference>
<dbReference type="GO" id="GO:0022851">
    <property type="term" value="F:GABA-gated chloride ion channel activity"/>
    <property type="evidence" value="ECO:0007669"/>
    <property type="project" value="Ensembl"/>
</dbReference>
<dbReference type="GO" id="GO:1904315">
    <property type="term" value="F:transmitter-gated monoatomic ion channel activity involved in regulation of postsynaptic membrane potential"/>
    <property type="evidence" value="ECO:0007669"/>
    <property type="project" value="Ensembl"/>
</dbReference>
<dbReference type="GO" id="GO:0071420">
    <property type="term" value="P:cellular response to histamine"/>
    <property type="evidence" value="ECO:0000250"/>
    <property type="project" value="UniProtKB"/>
</dbReference>
<dbReference type="GO" id="GO:0007268">
    <property type="term" value="P:chemical synaptic transmission"/>
    <property type="evidence" value="ECO:0000304"/>
    <property type="project" value="ProtInc"/>
</dbReference>
<dbReference type="GO" id="GO:1902476">
    <property type="term" value="P:chloride transmembrane transport"/>
    <property type="evidence" value="ECO:0000314"/>
    <property type="project" value="ComplexPortal"/>
</dbReference>
<dbReference type="GO" id="GO:0090102">
    <property type="term" value="P:cochlea development"/>
    <property type="evidence" value="ECO:0007669"/>
    <property type="project" value="Ensembl"/>
</dbReference>
<dbReference type="GO" id="GO:0007214">
    <property type="term" value="P:gamma-aminobutyric acid signaling pathway"/>
    <property type="evidence" value="ECO:0000314"/>
    <property type="project" value="ComplexPortal"/>
</dbReference>
<dbReference type="GO" id="GO:1904862">
    <property type="term" value="P:inhibitory synapse assembly"/>
    <property type="evidence" value="ECO:0000314"/>
    <property type="project" value="UniProtKB"/>
</dbReference>
<dbReference type="GO" id="GO:0060119">
    <property type="term" value="P:inner ear receptor cell development"/>
    <property type="evidence" value="ECO:0007669"/>
    <property type="project" value="Ensembl"/>
</dbReference>
<dbReference type="GO" id="GO:0060384">
    <property type="term" value="P:innervation"/>
    <property type="evidence" value="ECO:0007669"/>
    <property type="project" value="Ensembl"/>
</dbReference>
<dbReference type="GO" id="GO:0051932">
    <property type="term" value="P:synaptic transmission, GABAergic"/>
    <property type="evidence" value="ECO:0000250"/>
    <property type="project" value="BHF-UCL"/>
</dbReference>
<dbReference type="CDD" id="cd18999">
    <property type="entry name" value="LGIC_ECD_GABAAR_B"/>
    <property type="match status" value="1"/>
</dbReference>
<dbReference type="FunFam" id="1.20.58.390:FF:000097">
    <property type="entry name" value="Gamma-aminobutyric acid (GABA) A receptor, beta 2"/>
    <property type="match status" value="1"/>
</dbReference>
<dbReference type="FunFam" id="2.70.170.10:FF:000004">
    <property type="entry name" value="Gamma-aminobutyric acid receptor subunit beta-2 isoform A"/>
    <property type="match status" value="1"/>
</dbReference>
<dbReference type="Gene3D" id="2.70.170.10">
    <property type="entry name" value="Neurotransmitter-gated ion-channel ligand-binding domain"/>
    <property type="match status" value="1"/>
</dbReference>
<dbReference type="Gene3D" id="1.20.58.390">
    <property type="entry name" value="Neurotransmitter-gated ion-channel transmembrane domain"/>
    <property type="match status" value="1"/>
</dbReference>
<dbReference type="InterPro" id="IPR006028">
    <property type="entry name" value="GABAA/Glycine_rcpt"/>
</dbReference>
<dbReference type="InterPro" id="IPR002289">
    <property type="entry name" value="GABAAb_rcpt"/>
</dbReference>
<dbReference type="InterPro" id="IPR006202">
    <property type="entry name" value="Neur_chan_lig-bd"/>
</dbReference>
<dbReference type="InterPro" id="IPR036734">
    <property type="entry name" value="Neur_chan_lig-bd_sf"/>
</dbReference>
<dbReference type="InterPro" id="IPR006201">
    <property type="entry name" value="Neur_channel"/>
</dbReference>
<dbReference type="InterPro" id="IPR036719">
    <property type="entry name" value="Neuro-gated_channel_TM_sf"/>
</dbReference>
<dbReference type="InterPro" id="IPR038050">
    <property type="entry name" value="Neuro_actylchol_rec"/>
</dbReference>
<dbReference type="InterPro" id="IPR006029">
    <property type="entry name" value="Neurotrans-gated_channel_TM"/>
</dbReference>
<dbReference type="InterPro" id="IPR018000">
    <property type="entry name" value="Neurotransmitter_ion_chnl_CS"/>
</dbReference>
<dbReference type="NCBIfam" id="TIGR00860">
    <property type="entry name" value="LIC"/>
    <property type="match status" value="1"/>
</dbReference>
<dbReference type="PANTHER" id="PTHR18945">
    <property type="entry name" value="NEUROTRANSMITTER GATED ION CHANNEL"/>
    <property type="match status" value="1"/>
</dbReference>
<dbReference type="Pfam" id="PF02931">
    <property type="entry name" value="Neur_chan_LBD"/>
    <property type="match status" value="1"/>
</dbReference>
<dbReference type="Pfam" id="PF02932">
    <property type="entry name" value="Neur_chan_memb"/>
    <property type="match status" value="1"/>
</dbReference>
<dbReference type="PRINTS" id="PR01160">
    <property type="entry name" value="GABAARBETA"/>
</dbReference>
<dbReference type="PRINTS" id="PR00253">
    <property type="entry name" value="GABAARECEPTR"/>
</dbReference>
<dbReference type="PRINTS" id="PR00252">
    <property type="entry name" value="NRIONCHANNEL"/>
</dbReference>
<dbReference type="SUPFAM" id="SSF90112">
    <property type="entry name" value="Neurotransmitter-gated ion-channel transmembrane pore"/>
    <property type="match status" value="1"/>
</dbReference>
<dbReference type="SUPFAM" id="SSF63712">
    <property type="entry name" value="Nicotinic receptor ligand binding domain-like"/>
    <property type="match status" value="1"/>
</dbReference>
<dbReference type="PROSITE" id="PS00236">
    <property type="entry name" value="NEUROTR_ION_CHANNEL"/>
    <property type="match status" value="1"/>
</dbReference>
<comment type="function">
    <text evidence="2 7 10 11 13 14 16 17">Beta subunit of the heteropentameric ligand-gated chloride channel gated by gamma-aminobutyric acid (GABA), a major inhibitory neurotransmitter in the brain (PubMed:19763268, PubMed:27789573, PubMed:29950725, PubMed:8264558). GABA-gated chloride channels, also named GABA(A) receptors (GABAAR), consist of five subunits arranged around a central pore and contain GABA active binding site(s) located at the alpha and beta subunit interface(s) (PubMed:29950725). When activated by GABA, GABAARs selectively allow the flow of chloride anions across the cell membrane down their electrochemical gradient (By similarity). Chloride influx into the postsynaptic neuron following GABAAR opening decreases the neuron ability to generate a new action potential, thereby reducing nerve transmission (By similarity). GABAARs containing alpha-1 and beta-2 or -3 subunits exhibit synaptogenic activity; the gamma-2 subunit being necessary but not sufficient to induce rapid synaptic contacts formation (PubMed:23909897, PubMed:25489750). Extrasynaptic beta-2 receptors contribute to the tonic GABAergic inhibition (By similarity). Beta-containing GABAARs can simultaneously bind GABA and histamine where histamine binds at the interface of two neighboring beta subunits, which may be involved in the regulation of sleep and wakefulness (By similarity).</text>
</comment>
<comment type="catalytic activity">
    <reaction evidence="2">
        <text>chloride(in) = chloride(out)</text>
        <dbReference type="Rhea" id="RHEA:29823"/>
        <dbReference type="ChEBI" id="CHEBI:17996"/>
    </reaction>
</comment>
<comment type="activity regulation">
    <text evidence="3 7 16">Allosterically activated by benzodiazepines (PubMed:29950725). Allosterically activated by the anesthetic etomidate (By similarity). Inhibited by the antagonist bicuculline (PubMed:29950725). Potentiated by histamine (By similarity).</text>
</comment>
<comment type="subunit">
    <text evidence="7 16 17">Heteropentamer, formed by a combination of alpha (GABRA1-6), beta (GABRB1-3), gamma (GABRG1-3), delta (GABRD), epsilon (GABRE), rho (GABRR1-3), pi (GABRP) and theta (GABRQ) chains, each subunit exhibiting distinct physiological and pharmacological properties (PubMed:29950725, PubMed:8264558). Interacts with UBQLN1 (By similarity). May interact with KIF21B (By similarity). Identified in a complex of 720 kDa composed of LHFPL4, NLGN2, GABRA1, GABRB2, GABRG2 and GABRB3 (By similarity).</text>
</comment>
<comment type="subcellular location">
    <subcellularLocation>
        <location evidence="7">Postsynaptic cell membrane</location>
        <topology evidence="16">Multi-pass membrane protein</topology>
    </subcellularLocation>
    <subcellularLocation>
        <location evidence="10 17">Cell membrane</location>
        <topology evidence="16">Multi-pass membrane protein</topology>
    </subcellularLocation>
    <subcellularLocation>
        <location evidence="7">Cytoplasmic vesicle membrane</location>
    </subcellularLocation>
</comment>
<comment type="alternative products">
    <event type="alternative splicing"/>
    <isoform>
        <id>P47870-2</id>
        <name>1</name>
        <name>Long</name>
        <name>Beta-2L</name>
        <sequence type="displayed"/>
    </isoform>
    <isoform>
        <id>P47870-1</id>
        <name>2</name>
        <name>Short</name>
        <name>Beta-2S</name>
        <sequence type="described" ref="VSP_038825"/>
    </isoform>
    <isoform>
        <id>P47870-3</id>
        <name>3</name>
        <name>Beta-2S1</name>
        <sequence type="described" ref="VSP_038823 VSP_038824 VSP_038828"/>
    </isoform>
    <isoform>
        <id>P47870-4</id>
        <name>4</name>
        <name>Beta-2S2</name>
        <sequence type="described" ref="VSP_038825 VSP_038826 VSP_038827"/>
    </isoform>
</comment>
<comment type="tissue specificity">
    <text evidence="9 10">Isoform 1 and isoform 2 show reduced expression in schizophrenic brain. Isoform 3 shows increased expression in schizophrenic and bipolar disorder brains while isoform 4 shows reduced expression.</text>
</comment>
<comment type="domain">
    <text evidence="6">The extracellular domain contributes to synaptic contact formation.</text>
</comment>
<comment type="domain">
    <text evidence="16">GABAARs subunits share a common topological structure: a peptide sequence made up of a long extracellular N-terminal, four transmembrane domains, intracellular or cytoplasmic domain located between the third and the fourth transmembrane domains.</text>
</comment>
<comment type="disease" evidence="12 14 15">
    <disease id="DI-05174">
        <name>Epileptic encephalopathy, infantile or early childhood, 2</name>
        <acronym>IECEE2</acronym>
        <description>A form of epileptic encephalopathy, a heterogeneous group of severe childhood onset epilepsies characterized by refractory seizures, neurodevelopmental impairment, and poor prognosis. Development is normal prior to seizure onset, after which cognitive and motor delays become apparent. IECEE2 is an autosomal dominant condition with variable age at seizure onset, ranging from early infancy to 6 years.</description>
        <dbReference type="MIM" id="617829"/>
    </disease>
    <text>The disease is caused by variants affecting the gene represented in this entry.</text>
</comment>
<comment type="similarity">
    <text evidence="25">Belongs to the ligand-gated ion channel (TC 1.A.9) family. Gamma-aminobutyric acid receptor (TC 1.A.9.5) subfamily. GABRB2 sub-subfamily.</text>
</comment>
<comment type="online information" name="Protein Spotlight">
    <link uri="https://www.proteinspotlight.org/back_issues/056"/>
    <text>Forbidden fruit - Issue 56 of March 2005</text>
</comment>